<protein>
    <recommendedName>
        <fullName evidence="6">Embryonic developmental protein tofu-6</fullName>
    </recommendedName>
    <alternativeName>
        <fullName evidence="8">21U-RNA biogenesis fouled up protein 6</fullName>
    </alternativeName>
    <alternativeName>
        <fullName evidence="6">Maternal effect lethal protein 47</fullName>
    </alternativeName>
</protein>
<keyword id="KW-0002">3D-structure</keyword>
<keyword id="KW-0131">Cell cycle</keyword>
<keyword id="KW-0132">Cell division</keyword>
<keyword id="KW-0159">Chromosome partition</keyword>
<keyword id="KW-0963">Cytoplasm</keyword>
<keyword id="KW-0217">Developmental protein</keyword>
<keyword id="KW-0539">Nucleus</keyword>
<keyword id="KW-1185">Reference proteome</keyword>
<keyword id="KW-0694">RNA-binding</keyword>
<keyword id="KW-0943">RNA-mediated gene silencing</keyword>
<gene>
    <name evidence="8" type="primary">tofu-6</name>
    <name evidence="8" type="synonym">mel-47</name>
    <name evidence="8" type="ORF">EEED8.1</name>
</gene>
<reference key="1">
    <citation type="journal article" date="1998" name="Science">
        <title>Genome sequence of the nematode C. elegans: a platform for investigating biology.</title>
        <authorList>
            <consortium name="The C. elegans sequencing consortium"/>
        </authorList>
    </citation>
    <scope>NUCLEOTIDE SEQUENCE [LARGE SCALE GENOMIC DNA]</scope>
    <source>
        <strain>Bristol N2</strain>
    </source>
</reference>
<reference key="2">
    <citation type="submission" date="2000-08" db="EMBL/GenBank/DDBJ databases">
        <title>The Caenorhabditis elegans transcriptome project, a complementary view of the genome.</title>
        <authorList>
            <person name="Kohara Y."/>
            <person name="Shin-i T."/>
            <person name="Suzuki Y."/>
            <person name="Sugano S."/>
            <person name="Potdevin M."/>
            <person name="Thierry-Mieg Y."/>
            <person name="Thierry-Mieg D."/>
            <person name="Thierry-Mieg J."/>
        </authorList>
    </citation>
    <scope>NUCLEOTIDE SEQUENCE [LARGE SCALE MRNA]</scope>
    <source>
        <strain>Bristol N2</strain>
    </source>
</reference>
<reference key="3">
    <citation type="journal article" date="2007" name="Mol. Genet. Genomics">
        <title>MEL-47, a novel protein required for early cell divisions in the nematode Caenorhabditis elegans.</title>
        <authorList>
            <person name="Minasaki R."/>
            <person name="Streit A."/>
        </authorList>
    </citation>
    <scope>FUNCTION</scope>
    <scope>TISSUE SPECIFICITY</scope>
    <scope>DEVELOPMENTAL STAGE</scope>
    <scope>DISRUPTION PHENOTYPE</scope>
</reference>
<reference key="4">
    <citation type="journal article" date="2019" name="Cell Rep.">
        <title>Functional Proteomics Identifies a PICS Complex Required for piRNA Maturation and Chromosome Segregation.</title>
        <authorList>
            <person name="Zeng C."/>
            <person name="Weng C."/>
            <person name="Wang X."/>
            <person name="Yan Y.H."/>
            <person name="Li W.J."/>
            <person name="Xu D."/>
            <person name="Hong M."/>
            <person name="Liao S."/>
            <person name="Dong M.Q."/>
            <person name="Feng X."/>
            <person name="Xu C."/>
            <person name="Guang S."/>
        </authorList>
    </citation>
    <scope>FUNCTION</scope>
    <scope>IDENTIFICATION IN THE PETISCO COMPLEXES</scope>
    <scope>INTERACTION WITH IFE-3; PID-3; PID-1; TOST-1 AND ERH-2</scope>
    <scope>SUBCELLULAR LOCATION</scope>
    <scope>TISSUE SPECIFICITY</scope>
    <scope>DEVELOPMENTAL STAGE</scope>
    <scope>DISRUPTION PHENOTYPE</scope>
    <scope>MUTAGENESIS OF 52-GLN--LEU-367; 144-SER--SER-253 AND 270-TRP--LEU-367</scope>
</reference>
<reference key="5">
    <citation type="journal article" date="2019" name="Genes Dev.">
        <title>PETISCO is a novel protein complex required for 21U RNA biogenesis and embryonic viability.</title>
        <authorList>
            <person name="Cordeiro Rodrigues R.J."/>
            <person name="de Jesus Domingues A.M."/>
            <person name="Hellmann S."/>
            <person name="Dietz S."/>
            <person name="de Albuquerque B.F.M."/>
            <person name="Renz C."/>
            <person name="Ulrich H.D."/>
            <person name="Sarkies P."/>
            <person name="Butter F."/>
            <person name="Ketting R.F."/>
        </authorList>
    </citation>
    <scope>FUNCTION</scope>
    <scope>IDENTIFICATION IN THE PETISCO COMPLEXES</scope>
    <scope>INTERACTION WITH IFE-3 AND PID-3</scope>
    <scope>SUBCELLULAR LOCATION</scope>
    <scope>TISSUE SPECIFICITY</scope>
    <scope>DEVELOPMENTAL STAGE</scope>
    <scope>DISRUPTION PHENOTYPE</scope>
    <scope>MUTAGENESIS OF 52-GLN--LEU-367 AND 270-TRP--LEU-367</scope>
</reference>
<reference evidence="9" key="6">
    <citation type="journal article" date="2023" name="Nature">
        <title>piRNA processing by a trimeric Schlafen-domain nuclease.</title>
        <authorList>
            <person name="Podvalnaya N."/>
            <person name="Bronkhorst A.W."/>
            <person name="Lichtenberger R."/>
            <person name="Hellmann S."/>
            <person name="Nischwitz E."/>
            <person name="Falk T."/>
            <person name="Karaulanov E."/>
            <person name="Butter F."/>
            <person name="Falk S."/>
            <person name="Ketting R.F."/>
        </authorList>
    </citation>
    <scope>X-RAY CRYSTALLOGRAPHY (2.22 ANGSTROMS) OF 119-314</scope>
    <scope>FUNCTION</scope>
    <scope>INTERACTION WITH TOFU-1</scope>
</reference>
<reference key="7">
    <citation type="journal article" date="2024" name="Nature">
        <authorList>
            <person name="Podvalnaya N."/>
            <person name="Bronkhorst A.W."/>
            <person name="Lichtenberger R."/>
            <person name="Hellmann S."/>
            <person name="Nischwitz E."/>
            <person name="Falk T."/>
            <person name="Karaulanov E."/>
            <person name="Butter F."/>
            <person name="Falk S."/>
            <person name="Ketting R.F."/>
        </authorList>
    </citation>
    <scope>ERRATUM OF PUBMED:37758951</scope>
</reference>
<feature type="chain" id="PRO_0000082014" description="Embryonic developmental protein tofu-6">
    <location>
        <begin position="1"/>
        <end position="367"/>
    </location>
</feature>
<feature type="domain" description="RRM" evidence="1">
    <location>
        <begin position="13"/>
        <end position="92"/>
    </location>
</feature>
<feature type="region of interest" description="Required for ife-3 interaction" evidence="4">
    <location>
        <begin position="298"/>
        <end position="345"/>
    </location>
</feature>
<feature type="mutagenesis site" description="In it20; embryonic lethal with embryos arresting between the 64-128 cell stage. Reduces the number of type I and II 21U-RNAs (a class of 21 nucleotide PIWI-interacting RNAs (piRNAs) that possess a uracil residue at the 5'-end)." evidence="3 4">
    <location>
        <begin position="52"/>
        <end position="367"/>
    </location>
</feature>
<feature type="mutagenesis site" description="In ust95; reduces the accumulation of type I and II 21U-RNAs. Unlike wild-type, does not localize to perinuclear foci. Does not cause sterility. Does not exhibit chromosome segregation defects." evidence="4">
    <location>
        <begin position="144"/>
        <end position="253"/>
    </location>
</feature>
<feature type="mutagenesis site" description="In y2; sterile. Maternal effect lethal (Mel) phenotype. Reduces the number of type I and II 21U-RNAs (a class of 21 nucleotide PIWI-interacting RNAs (piRNAs) that possess a uracil residue at the 5'-end)." evidence="3 4">
    <location>
        <begin position="270"/>
        <end position="367"/>
    </location>
</feature>
<feature type="strand" evidence="10">
    <location>
        <begin position="14"/>
        <end position="21"/>
    </location>
</feature>
<feature type="helix" evidence="10">
    <location>
        <begin position="26"/>
        <end position="34"/>
    </location>
</feature>
<feature type="strand" evidence="10">
    <location>
        <begin position="39"/>
        <end position="47"/>
    </location>
</feature>
<feature type="strand" evidence="10">
    <location>
        <begin position="49"/>
        <end position="62"/>
    </location>
</feature>
<feature type="helix" evidence="10">
    <location>
        <begin position="63"/>
        <end position="71"/>
    </location>
</feature>
<feature type="strand" evidence="10">
    <location>
        <begin position="77"/>
        <end position="80"/>
    </location>
</feature>
<feature type="strand" evidence="10">
    <location>
        <begin position="83"/>
        <end position="89"/>
    </location>
</feature>
<feature type="strand" evidence="11">
    <location>
        <begin position="131"/>
        <end position="136"/>
    </location>
</feature>
<feature type="strand" evidence="11">
    <location>
        <begin position="151"/>
        <end position="156"/>
    </location>
</feature>
<feature type="helix" evidence="11">
    <location>
        <begin position="160"/>
        <end position="175"/>
    </location>
</feature>
<feature type="strand" evidence="11">
    <location>
        <begin position="191"/>
        <end position="197"/>
    </location>
</feature>
<feature type="strand" evidence="11">
    <location>
        <begin position="200"/>
        <end position="208"/>
    </location>
</feature>
<feature type="strand" evidence="11">
    <location>
        <begin position="211"/>
        <end position="214"/>
    </location>
</feature>
<feature type="turn" evidence="11">
    <location>
        <begin position="215"/>
        <end position="217"/>
    </location>
</feature>
<feature type="strand" evidence="11">
    <location>
        <begin position="220"/>
        <end position="222"/>
    </location>
</feature>
<feature type="helix" evidence="11">
    <location>
        <begin position="225"/>
        <end position="227"/>
    </location>
</feature>
<feature type="helix" evidence="11">
    <location>
        <begin position="233"/>
        <end position="235"/>
    </location>
</feature>
<feature type="strand" evidence="11">
    <location>
        <begin position="236"/>
        <end position="238"/>
    </location>
</feature>
<feature type="strand" evidence="11">
    <location>
        <begin position="240"/>
        <end position="247"/>
    </location>
</feature>
<feature type="strand" evidence="11">
    <location>
        <begin position="249"/>
        <end position="252"/>
    </location>
</feature>
<feature type="turn" evidence="11">
    <location>
        <begin position="254"/>
        <end position="256"/>
    </location>
</feature>
<feature type="helix" evidence="11">
    <location>
        <begin position="257"/>
        <end position="259"/>
    </location>
</feature>
<feature type="helix" evidence="11">
    <location>
        <begin position="260"/>
        <end position="274"/>
    </location>
</feature>
<feature type="strand" evidence="11">
    <location>
        <begin position="278"/>
        <end position="286"/>
    </location>
</feature>
<feature type="strand" evidence="11">
    <location>
        <begin position="289"/>
        <end position="296"/>
    </location>
</feature>
<feature type="helix" evidence="11">
    <location>
        <begin position="301"/>
        <end position="307"/>
    </location>
</feature>
<feature type="strand" evidence="11">
    <location>
        <begin position="310"/>
        <end position="313"/>
    </location>
</feature>
<organism>
    <name type="scientific">Caenorhabditis elegans</name>
    <dbReference type="NCBI Taxonomy" id="6239"/>
    <lineage>
        <taxon>Eukaryota</taxon>
        <taxon>Metazoa</taxon>
        <taxon>Ecdysozoa</taxon>
        <taxon>Nematoda</taxon>
        <taxon>Chromadorea</taxon>
        <taxon>Rhabditida</taxon>
        <taxon>Rhabditina</taxon>
        <taxon>Rhabditomorpha</taxon>
        <taxon>Rhabditoidea</taxon>
        <taxon>Rhabditidae</taxon>
        <taxon>Peloderinae</taxon>
        <taxon>Caenorhabditis</taxon>
    </lineage>
</organism>
<comment type="function">
    <text evidence="2 3 4 5 7">Component of the pid-1 and tost-1 variants of the PETISCO complexes, which have roles in the biogenesis of a class of 21 nucleotide PIWI-interacting RNAs (piRNAs) that possess a uracil residue at the 5'-end (also called 21U-RNAs) and embryogenesis, respectively (PubMed:31147388, PubMed:31216475). Promotes the biogenesis of 21U-RNAs (PubMed:31216475). Mediates the interaction between the PETISCO complex and the PUCH complex, the endoribonuclease complex processing the 5'-end of precursor piRNAs, thereby enhancing mature piRNA production (PubMed:37758951). Required for chromosome segregation and cell division in early embryos (PubMed:17171368, PubMed:31216475). May have a role in DNA replication (PubMed:17171368).</text>
</comment>
<comment type="subunit">
    <text evidence="3 4 5 7">Component of the pid-1 variant of the PETISCO complex (also called the pid-3, erh-2, tofu-6, and ife-3 small RNA complex) containing at least pid-1, tofu-6, ife-3, pid-3, and erh-2, which is required for the biogenesis of 21 nucleotide PIWI-interacting RNAs (piRNAs) that possess a uracil residue at the 5'-end (also called 21U-RNAs) (PubMed:31147388, PubMed:31216475). Within the pid-1 variant of the PETISCO complex interacts with pid-1 (PubMed:31216475). Component of the tost-1 variant of the PETISCO complex (also called the pid-3, erh-2, tofu-6, and ife-3 small RNA complex) containing at least tost-1, tofu-6, ife-3, pid-3, and erh-2, which plays an essential role in embryogenesis (PubMed:31147388, PubMed:31216475). Within the tost-1 variant of the PETISCO complex interacts with tost-1 (PubMed:31216475). Within the pid-1 and tost-1 variants of the PETISCO complexes interacts (via C-terminus) with ife-3 (PubMed:31147388, PubMed:31216475). Within the pid-1 and tost-1 variants of the PETISCO complexes interacts (via the RRM domain) with pid-3 (PubMed:31147388, PubMed:31216475). Within the pid-1 and tost-1 variants of the PETISCO complexes interacts (via the RRM domain) with erh-2 (PubMed:31216475). In contrast to the pid-1 variant of the PETISCO complex, the tost-1 variant of the PETISCO complex plays a minor role in the biogenesis of 21U-RNAs (PubMed:31147388). Interacts (via residues 120-314) with the PUCH complex subunit tofu-1 (via residues 82-172); the interaction between the PETISCO and PUCH complex members enhances piRNA production in vivo (PubMed:37758951).</text>
</comment>
<comment type="interaction">
    <interactant intactId="EBI-2001908">
        <id>Q09293</id>
    </interactant>
    <interactant intactId="EBI-330119">
        <id>O61955</id>
        <label>ife-3</label>
    </interactant>
    <organismsDiffer>false</organismsDiffer>
    <experiments>5</experiments>
</comment>
<comment type="interaction">
    <interactant intactId="EBI-2001908">
        <id>Q09293</id>
    </interactant>
    <interactant intactId="EBI-2415582">
        <id>O76616</id>
        <label>pid-3</label>
    </interactant>
    <organismsDiffer>false</organismsDiffer>
    <experiments>8</experiments>
</comment>
<comment type="subcellular location">
    <subcellularLocation>
        <location evidence="3 4">Cytoplasm</location>
    </subcellularLocation>
    <subcellularLocation>
        <location evidence="3 4">Cytoplasm</location>
        <location evidence="3 4">Perinuclear region</location>
    </subcellularLocation>
    <subcellularLocation>
        <location evidence="4">Nucleus</location>
    </subcellularLocation>
    <text evidence="3 4">Dispersedly distributes throughout the cytoplasm in early embryos (PubMed:31147388). During early embryogenesis, localizes to the nucleus at prophase of cell division, and remains in the cytosol at interphase in 2- and 4-cell embryos (PubMed:31216475). Does not localize to cytoplasmic granules in oocytes and embryos (PubMed:31216475). Localizes to puncta in the perinuclear region in the germline syncytium (PubMed:31147388, PubMed:31216475). Localization to the perinuclear region in the germline is dependent on pid-1, tost-1, pics-1 and erh-2 (PubMed:31216475).</text>
</comment>
<comment type="tissue specificity">
    <text evidence="2 3 4">Expression is restricted to the germline (at protein level).</text>
</comment>
<comment type="developmental stage">
    <text evidence="2 3 4">Expressed both maternally and zygotically. Relatively high levels of expression in early embryos, weakly detectable in subsequent developmental stages and enriched in adults (at protein level) (PubMed:31147388). During early embryogenesis, expressed during prophase and interphase in 2- and 4-cell embryos (PubMed:31216475).</text>
</comment>
<comment type="disruption phenotype">
    <text evidence="2 3 4">Worms whose mothers are lacking mel-47 exhibit prolonged interphase between the two and four cell stages of development. Mutants arrest as early embryos ranging from 50 to 80 cells with no signs of morphogenesis. Chromatin bridges which connect nuclei remain present after cytokinesis appears complete. RNAi-mediated knockdown results in maternal effect lethal (Mel phenotype) (PubMed:31147388). RNAi-mediated knockdown results in chromosome segregation and cell division defects in early embryos (PubMed:31216475). RNAi-mediated knockdown results in defective activity of the PIWI-interacting RNA (piRNA) silencing pathway (PubMed:31147388). RNAi-mediated knockdown results in the failure of pid-1, pid-3 and erh-2 to localize to perinuclear granules, but instead they accumulate in the nucleus (PubMed:31216475).</text>
</comment>
<sequence length="367" mass="41102">MASSSTAYYLKDAGFHIRNIPKAWNDWNLFHVFQNFGKVSYCRVVGQSNDGQVQLGFVNMMSVADADEVRKNLNDGNLIGENFTLKVTDHKNVGGSLLPMASNSVQKLVSSPPSKSGPVLLSSSWLPLNKDIEVEVVDYLPSSSVAPDLFALTLLRINDSSMKEKYDSMHEKMNAYAQIVPFDSELEIGYDGVFRDAPRSVRRVRRISATKLYLVDFGKIINYEKAKCFQLPKVFQSMPTRVSLCGLDGLTWSPVAIPSFDNIREVVKKWGQMENSTLHAMACGFQGSINMINLFCGKSILADRLQRKGVCEYLPRSQQPHYAYSRETLLQHNNSGVTAQISNDADVVKDLLKKIDGVKNMLRELEL</sequence>
<name>TOFU6_CAEEL</name>
<evidence type="ECO:0000255" key="1">
    <source>
        <dbReference type="PROSITE-ProRule" id="PRU00176"/>
    </source>
</evidence>
<evidence type="ECO:0000269" key="2">
    <source>
    </source>
</evidence>
<evidence type="ECO:0000269" key="3">
    <source>
    </source>
</evidence>
<evidence type="ECO:0000269" key="4">
    <source>
    </source>
</evidence>
<evidence type="ECO:0000269" key="5">
    <source>
    </source>
</evidence>
<evidence type="ECO:0000305" key="6"/>
<evidence type="ECO:0000305" key="7">
    <source>
    </source>
</evidence>
<evidence type="ECO:0000312" key="8">
    <source>
        <dbReference type="WormBase" id="EEED8.1"/>
    </source>
</evidence>
<evidence type="ECO:0007744" key="9">
    <source>
        <dbReference type="PDB" id="9G6Z"/>
    </source>
</evidence>
<evidence type="ECO:0007829" key="10">
    <source>
        <dbReference type="PDB" id="7OCX"/>
    </source>
</evidence>
<evidence type="ECO:0007829" key="11">
    <source>
        <dbReference type="PDB" id="9G6Z"/>
    </source>
</evidence>
<accession>Q09293</accession>
<accession>Q9BMU5</accession>
<dbReference type="EMBL" id="BX284602">
    <property type="protein sequence ID" value="CCD68728.1"/>
    <property type="molecule type" value="Genomic_DNA"/>
</dbReference>
<dbReference type="EMBL" id="AF303251">
    <property type="protein sequence ID" value="AAG50209.1"/>
    <property type="molecule type" value="mRNA"/>
</dbReference>
<dbReference type="RefSeq" id="NP_001293507.1">
    <property type="nucleotide sequence ID" value="NM_001306578.5"/>
</dbReference>
<dbReference type="PDB" id="7D1L">
    <property type="method" value="X-ray"/>
    <property type="resolution" value="1.95 A"/>
    <property type="chains" value="A/B=1-92"/>
</dbReference>
<dbReference type="PDB" id="7D2Y">
    <property type="method" value="X-ray"/>
    <property type="resolution" value="2.68 A"/>
    <property type="chains" value="A/B=1-92"/>
</dbReference>
<dbReference type="PDB" id="7OCX">
    <property type="method" value="X-ray"/>
    <property type="resolution" value="1.70 A"/>
    <property type="chains" value="C/D=1-99"/>
</dbReference>
<dbReference type="PDB" id="9G6Z">
    <property type="method" value="X-ray"/>
    <property type="resolution" value="2.22 A"/>
    <property type="chains" value="A=119-314"/>
</dbReference>
<dbReference type="PDBsum" id="7D1L"/>
<dbReference type="PDBsum" id="7D2Y"/>
<dbReference type="PDBsum" id="7OCX"/>
<dbReference type="PDBsum" id="9G6Z"/>
<dbReference type="SMR" id="Q09293"/>
<dbReference type="ComplexPortal" id="CPX-4306">
    <property type="entry name" value="PETISCO, pid-1 variant"/>
</dbReference>
<dbReference type="ComplexPortal" id="CPX-4307">
    <property type="entry name" value="PETISCO, tost-1 variant"/>
</dbReference>
<dbReference type="FunCoup" id="Q09293">
    <property type="interactions" value="456"/>
</dbReference>
<dbReference type="IntAct" id="Q09293">
    <property type="interactions" value="10"/>
</dbReference>
<dbReference type="STRING" id="6239.EEED8.1.2"/>
<dbReference type="iPTMnet" id="Q09293"/>
<dbReference type="PaxDb" id="6239-EEED8.1.2"/>
<dbReference type="PeptideAtlas" id="Q09293"/>
<dbReference type="EnsemblMetazoa" id="EEED8.1.1">
    <property type="protein sequence ID" value="EEED8.1.1"/>
    <property type="gene ID" value="WBGene00017132"/>
</dbReference>
<dbReference type="GeneID" id="24104386"/>
<dbReference type="KEGG" id="cel:CELE_EEED8.1"/>
<dbReference type="UCSC" id="EEED8.1.1">
    <property type="organism name" value="c. elegans"/>
</dbReference>
<dbReference type="AGR" id="WB:WBGene00017132"/>
<dbReference type="CTD" id="24104386"/>
<dbReference type="WormBase" id="EEED8.1">
    <property type="protein sequence ID" value="CE26746"/>
    <property type="gene ID" value="WBGene00017132"/>
    <property type="gene designation" value="tofu-6"/>
</dbReference>
<dbReference type="eggNOG" id="ENOG502SX3Q">
    <property type="taxonomic scope" value="Eukaryota"/>
</dbReference>
<dbReference type="HOGENOM" id="CLU_754855_0_0_1"/>
<dbReference type="InParanoid" id="Q09293"/>
<dbReference type="OMA" id="NDWNLFH"/>
<dbReference type="OrthoDB" id="5818176at2759"/>
<dbReference type="PRO" id="PR:Q09293"/>
<dbReference type="Proteomes" id="UP000001940">
    <property type="component" value="Chromosome II"/>
</dbReference>
<dbReference type="Bgee" id="WBGene00017132">
    <property type="expression patterns" value="Expressed in germ line (C elegans) and 4 other cell types or tissues"/>
</dbReference>
<dbReference type="GO" id="GO:0005737">
    <property type="term" value="C:cytoplasm"/>
    <property type="evidence" value="ECO:0000314"/>
    <property type="project" value="UniProtKB"/>
</dbReference>
<dbReference type="GO" id="GO:0005634">
    <property type="term" value="C:nucleus"/>
    <property type="evidence" value="ECO:0000314"/>
    <property type="project" value="UniProtKB"/>
</dbReference>
<dbReference type="GO" id="GO:0048471">
    <property type="term" value="C:perinuclear region of cytoplasm"/>
    <property type="evidence" value="ECO:0000314"/>
    <property type="project" value="UniProtKB"/>
</dbReference>
<dbReference type="GO" id="GO:0034518">
    <property type="term" value="C:RNA cap binding complex"/>
    <property type="evidence" value="ECO:0000353"/>
    <property type="project" value="ComplexPortal"/>
</dbReference>
<dbReference type="GO" id="GO:0003723">
    <property type="term" value="F:RNA binding"/>
    <property type="evidence" value="ECO:0007669"/>
    <property type="project" value="UniProtKB-KW"/>
</dbReference>
<dbReference type="GO" id="GO:0034585">
    <property type="term" value="P:21U-RNA metabolic process"/>
    <property type="evidence" value="ECO:0000303"/>
    <property type="project" value="ComplexPortal"/>
</dbReference>
<dbReference type="GO" id="GO:0051301">
    <property type="term" value="P:cell division"/>
    <property type="evidence" value="ECO:0000315"/>
    <property type="project" value="UniProtKB"/>
</dbReference>
<dbReference type="GO" id="GO:0006260">
    <property type="term" value="P:DNA replication"/>
    <property type="evidence" value="ECO:0000315"/>
    <property type="project" value="UniProtKB"/>
</dbReference>
<dbReference type="GO" id="GO:0009792">
    <property type="term" value="P:embryo development ending in birth or egg hatching"/>
    <property type="evidence" value="ECO:0000315"/>
    <property type="project" value="WormBase"/>
</dbReference>
<dbReference type="GO" id="GO:0040016">
    <property type="term" value="P:embryonic cleavage"/>
    <property type="evidence" value="ECO:0000315"/>
    <property type="project" value="WormBase"/>
</dbReference>
<dbReference type="GO" id="GO:0051306">
    <property type="term" value="P:mitotic sister chromatid separation"/>
    <property type="evidence" value="ECO:0000315"/>
    <property type="project" value="WormBase"/>
</dbReference>
<dbReference type="GO" id="GO:0034587">
    <property type="term" value="P:piRNA processing"/>
    <property type="evidence" value="ECO:0000315"/>
    <property type="project" value="UniProtKB"/>
</dbReference>
<dbReference type="GO" id="GO:0051781">
    <property type="term" value="P:positive regulation of cell division"/>
    <property type="evidence" value="ECO:0000315"/>
    <property type="project" value="UniProtKB"/>
</dbReference>
<dbReference type="GO" id="GO:0051984">
    <property type="term" value="P:positive regulation of chromosome segregation"/>
    <property type="evidence" value="ECO:0000315"/>
    <property type="project" value="UniProtKB"/>
</dbReference>
<dbReference type="CDD" id="cd00590">
    <property type="entry name" value="RRM_SF"/>
    <property type="match status" value="1"/>
</dbReference>
<dbReference type="Gene3D" id="3.30.70.330">
    <property type="match status" value="1"/>
</dbReference>
<dbReference type="InterPro" id="IPR012677">
    <property type="entry name" value="Nucleotide-bd_a/b_plait_sf"/>
</dbReference>
<dbReference type="InterPro" id="IPR035979">
    <property type="entry name" value="RBD_domain_sf"/>
</dbReference>
<dbReference type="InterPro" id="IPR000504">
    <property type="entry name" value="RRM_dom"/>
</dbReference>
<dbReference type="Pfam" id="PF00076">
    <property type="entry name" value="RRM_1"/>
    <property type="match status" value="1"/>
</dbReference>
<dbReference type="SMART" id="SM00360">
    <property type="entry name" value="RRM"/>
    <property type="match status" value="1"/>
</dbReference>
<dbReference type="SUPFAM" id="SSF54928">
    <property type="entry name" value="RNA-binding domain, RBD"/>
    <property type="match status" value="1"/>
</dbReference>
<dbReference type="PROSITE" id="PS50102">
    <property type="entry name" value="RRM"/>
    <property type="match status" value="1"/>
</dbReference>
<proteinExistence type="evidence at protein level"/>